<reference key="1">
    <citation type="journal article" date="1990" name="Nucleic Acids Res.">
        <title>Sequence of a ubiquitin carboxyl extension protein of Nicotiana tabacum.</title>
        <authorList>
            <person name="Genschik P."/>
            <person name="Parmentier Y."/>
            <person name="Criqui M.-C."/>
            <person name="Fleck J."/>
        </authorList>
    </citation>
    <scope>NUCLEOTIDE SEQUENCE [GENOMIC DNA]</scope>
    <source>
        <strain>cv. NK 326</strain>
    </source>
</reference>
<keyword id="KW-1185">Reference proteome</keyword>
<keyword id="KW-0687">Ribonucleoprotein</keyword>
<keyword id="KW-0689">Ribosomal protein</keyword>
<comment type="miscellaneous">
    <text>This ribosomal protein is synthesized as a C-terminal extension protein (CEP) of ubiquitin.</text>
</comment>
<comment type="similarity">
    <text evidence="1">Belongs to the eukaryotic ribosomal protein eL40 family.</text>
</comment>
<sequence length="72" mass="8501">IIEPSLKALASKFNCDKMICRKCYVRCPRRTPQRTCRVLTWIPQARLPPRATNCRKRKCGHTNHVRPKKKLK</sequence>
<organism>
    <name type="scientific">Nicotiana tabacum</name>
    <name type="common">Common tobacco</name>
    <dbReference type="NCBI Taxonomy" id="4097"/>
    <lineage>
        <taxon>Eukaryota</taxon>
        <taxon>Viridiplantae</taxon>
        <taxon>Streptophyta</taxon>
        <taxon>Embryophyta</taxon>
        <taxon>Tracheophyta</taxon>
        <taxon>Spermatophyta</taxon>
        <taxon>Magnoliopsida</taxon>
        <taxon>eudicotyledons</taxon>
        <taxon>Gunneridae</taxon>
        <taxon>Pentapetalae</taxon>
        <taxon>asterids</taxon>
        <taxon>lamiids</taxon>
        <taxon>Solanales</taxon>
        <taxon>Solanaceae</taxon>
        <taxon>Nicotianoideae</taxon>
        <taxon>Nicotianeae</taxon>
        <taxon>Nicotiana</taxon>
    </lineage>
</organism>
<accession>P19379</accession>
<name>RL40_TOBAC</name>
<feature type="chain" id="PRO_0000138769" description="Large ribosomal subunit protein eL40">
    <location>
        <begin position="1"/>
        <end position="72"/>
    </location>
</feature>
<evidence type="ECO:0000305" key="1"/>
<proteinExistence type="inferred from homology"/>
<dbReference type="EMBL" id="X53011">
    <property type="protein sequence ID" value="CAA37192.1"/>
    <property type="molecule type" value="Genomic_DNA"/>
</dbReference>
<dbReference type="PIR" id="S10332">
    <property type="entry name" value="S10332"/>
</dbReference>
<dbReference type="SMR" id="P19379"/>
<dbReference type="STRING" id="4097.P19379"/>
<dbReference type="PaxDb" id="4097-P19379"/>
<dbReference type="Proteomes" id="UP000084051">
    <property type="component" value="Unplaced"/>
</dbReference>
<dbReference type="GO" id="GO:1990904">
    <property type="term" value="C:ribonucleoprotein complex"/>
    <property type="evidence" value="ECO:0007669"/>
    <property type="project" value="UniProtKB-KW"/>
</dbReference>
<dbReference type="GO" id="GO:0005840">
    <property type="term" value="C:ribosome"/>
    <property type="evidence" value="ECO:0007669"/>
    <property type="project" value="UniProtKB-KW"/>
</dbReference>
<dbReference type="GO" id="GO:0003735">
    <property type="term" value="F:structural constituent of ribosome"/>
    <property type="evidence" value="ECO:0007669"/>
    <property type="project" value="InterPro"/>
</dbReference>
<dbReference type="GO" id="GO:0006412">
    <property type="term" value="P:translation"/>
    <property type="evidence" value="ECO:0007669"/>
    <property type="project" value="InterPro"/>
</dbReference>
<dbReference type="Gene3D" id="4.10.1060.50">
    <property type="match status" value="2"/>
</dbReference>
<dbReference type="InterPro" id="IPR001975">
    <property type="entry name" value="Ribosomal_eL40_dom"/>
</dbReference>
<dbReference type="InterPro" id="IPR038587">
    <property type="entry name" value="Ribosomal_eL40_sf"/>
</dbReference>
<dbReference type="InterPro" id="IPR011332">
    <property type="entry name" value="Ribosomal_zn-bd"/>
</dbReference>
<dbReference type="Pfam" id="PF01020">
    <property type="entry name" value="Ribosomal_L40e"/>
    <property type="match status" value="2"/>
</dbReference>
<dbReference type="SMART" id="SM01377">
    <property type="entry name" value="Ribosomal_L40e"/>
    <property type="match status" value="1"/>
</dbReference>
<dbReference type="SUPFAM" id="SSF57829">
    <property type="entry name" value="Zn-binding ribosomal proteins"/>
    <property type="match status" value="2"/>
</dbReference>
<protein>
    <recommendedName>
        <fullName evidence="1">Large ribosomal subunit protein eL40</fullName>
    </recommendedName>
    <alternativeName>
        <fullName>60S ribosomal protein L40</fullName>
    </alternativeName>
    <alternativeName>
        <fullName>CEP52</fullName>
    </alternativeName>
</protein>